<comment type="catalytic activity">
    <reaction evidence="1">
        <text>D-tagatofuranose 6-phosphate + ATP = D-tagatofuranose 1,6-bisphosphate + ADP + H(+)</text>
        <dbReference type="Rhea" id="RHEA:12420"/>
        <dbReference type="ChEBI" id="CHEBI:15378"/>
        <dbReference type="ChEBI" id="CHEBI:30616"/>
        <dbReference type="ChEBI" id="CHEBI:58694"/>
        <dbReference type="ChEBI" id="CHEBI:58695"/>
        <dbReference type="ChEBI" id="CHEBI:456216"/>
        <dbReference type="EC" id="2.7.1.144"/>
    </reaction>
</comment>
<comment type="pathway">
    <text evidence="1">Carbohydrate metabolism; D-tagatose 6-phosphate degradation; D-glyceraldehyde 3-phosphate and glycerone phosphate from D-tagatose 6-phosphate: step 1/2.</text>
</comment>
<comment type="similarity">
    <text evidence="1">Belongs to the carbohydrate kinase PfkB family. LacC subfamily.</text>
</comment>
<reference key="1">
    <citation type="journal article" date="2002" name="Proc. Natl. Acad. Sci. U.S.A.">
        <title>Complete genome sequence and comparative genomic analysis of an emerging human pathogen, serotype V Streptococcus agalactiae.</title>
        <authorList>
            <person name="Tettelin H."/>
            <person name="Masignani V."/>
            <person name="Cieslewicz M.J."/>
            <person name="Eisen J.A."/>
            <person name="Peterson S.N."/>
            <person name="Wessels M.R."/>
            <person name="Paulsen I.T."/>
            <person name="Nelson K.E."/>
            <person name="Margarit I."/>
            <person name="Read T.D."/>
            <person name="Madoff L.C."/>
            <person name="Wolf A.M."/>
            <person name="Beanan M.J."/>
            <person name="Brinkac L.M."/>
            <person name="Daugherty S.C."/>
            <person name="DeBoy R.T."/>
            <person name="Durkin A.S."/>
            <person name="Kolonay J.F."/>
            <person name="Madupu R."/>
            <person name="Lewis M.R."/>
            <person name="Radune D."/>
            <person name="Fedorova N.B."/>
            <person name="Scanlan D."/>
            <person name="Khouri H.M."/>
            <person name="Mulligan S."/>
            <person name="Carty H.A."/>
            <person name="Cline R.T."/>
            <person name="Van Aken S.E."/>
            <person name="Gill J."/>
            <person name="Scarselli M."/>
            <person name="Mora M."/>
            <person name="Iacobini E.T."/>
            <person name="Brettoni C."/>
            <person name="Galli G."/>
            <person name="Mariani M."/>
            <person name="Vegni F."/>
            <person name="Maione D."/>
            <person name="Rinaudo D."/>
            <person name="Rappuoli R."/>
            <person name="Telford J.L."/>
            <person name="Kasper D.L."/>
            <person name="Grandi G."/>
            <person name="Fraser C.M."/>
        </authorList>
    </citation>
    <scope>NUCLEOTIDE SEQUENCE [LARGE SCALE GENOMIC DNA]</scope>
    <source>
        <strain>ATCC BAA-611 / 2603 V/R</strain>
    </source>
</reference>
<dbReference type="EC" id="2.7.1.144" evidence="1"/>
<dbReference type="EMBL" id="AE009948">
    <property type="protein sequence ID" value="AAN00791.1"/>
    <property type="molecule type" value="Genomic_DNA"/>
</dbReference>
<dbReference type="RefSeq" id="NP_688918.1">
    <property type="nucleotide sequence ID" value="NC_004116.1"/>
</dbReference>
<dbReference type="RefSeq" id="WP_000604238.1">
    <property type="nucleotide sequence ID" value="NC_004116.1"/>
</dbReference>
<dbReference type="SMR" id="Q8DXC2"/>
<dbReference type="STRING" id="208435.SAG1929"/>
<dbReference type="KEGG" id="sag:SAG1929"/>
<dbReference type="PATRIC" id="fig|208435.3.peg.1934"/>
<dbReference type="HOGENOM" id="CLU_050013_5_0_9"/>
<dbReference type="OrthoDB" id="9801219at2"/>
<dbReference type="UniPathway" id="UPA00704">
    <property type="reaction ID" value="UER00715"/>
</dbReference>
<dbReference type="Proteomes" id="UP000000821">
    <property type="component" value="Chromosome"/>
</dbReference>
<dbReference type="GO" id="GO:0005829">
    <property type="term" value="C:cytosol"/>
    <property type="evidence" value="ECO:0007669"/>
    <property type="project" value="TreeGrafter"/>
</dbReference>
<dbReference type="GO" id="GO:0005524">
    <property type="term" value="F:ATP binding"/>
    <property type="evidence" value="ECO:0007669"/>
    <property type="project" value="UniProtKB-KW"/>
</dbReference>
<dbReference type="GO" id="GO:0008443">
    <property type="term" value="F:phosphofructokinase activity"/>
    <property type="evidence" value="ECO:0007669"/>
    <property type="project" value="TreeGrafter"/>
</dbReference>
<dbReference type="GO" id="GO:0009024">
    <property type="term" value="F:tagatose-6-phosphate kinase activity"/>
    <property type="evidence" value="ECO:0007669"/>
    <property type="project" value="UniProtKB-UniRule"/>
</dbReference>
<dbReference type="GO" id="GO:2001059">
    <property type="term" value="P:D-tagatose 6-phosphate catabolic process"/>
    <property type="evidence" value="ECO:0007669"/>
    <property type="project" value="UniProtKB-UniRule"/>
</dbReference>
<dbReference type="GO" id="GO:0019512">
    <property type="term" value="P:lactose catabolic process via tagatose-6-phosphate"/>
    <property type="evidence" value="ECO:0007669"/>
    <property type="project" value="InterPro"/>
</dbReference>
<dbReference type="CDD" id="cd01164">
    <property type="entry name" value="FruK_PfkB_like"/>
    <property type="match status" value="1"/>
</dbReference>
<dbReference type="FunFam" id="3.40.1190.20:FF:000001">
    <property type="entry name" value="Phosphofructokinase"/>
    <property type="match status" value="1"/>
</dbReference>
<dbReference type="Gene3D" id="3.40.1190.20">
    <property type="match status" value="1"/>
</dbReference>
<dbReference type="HAMAP" id="MF_01557">
    <property type="entry name" value="LacC"/>
    <property type="match status" value="1"/>
</dbReference>
<dbReference type="InterPro" id="IPR002173">
    <property type="entry name" value="Carboh/pur_kinase_PfkB_CS"/>
</dbReference>
<dbReference type="InterPro" id="IPR005926">
    <property type="entry name" value="LacC"/>
</dbReference>
<dbReference type="InterPro" id="IPR011611">
    <property type="entry name" value="PfkB_dom"/>
</dbReference>
<dbReference type="InterPro" id="IPR029056">
    <property type="entry name" value="Ribokinase-like"/>
</dbReference>
<dbReference type="InterPro" id="IPR017583">
    <property type="entry name" value="Tagatose/fructose_Pkinase"/>
</dbReference>
<dbReference type="NCBIfam" id="TIGR03168">
    <property type="entry name" value="1-PFK"/>
    <property type="match status" value="1"/>
</dbReference>
<dbReference type="NCBIfam" id="TIGR01231">
    <property type="entry name" value="lacC"/>
    <property type="match status" value="1"/>
</dbReference>
<dbReference type="NCBIfam" id="NF010033">
    <property type="entry name" value="PRK13508.1"/>
    <property type="match status" value="1"/>
</dbReference>
<dbReference type="PANTHER" id="PTHR46566:SF5">
    <property type="entry name" value="1-PHOSPHOFRUCTOKINASE"/>
    <property type="match status" value="1"/>
</dbReference>
<dbReference type="PANTHER" id="PTHR46566">
    <property type="entry name" value="1-PHOSPHOFRUCTOKINASE-RELATED"/>
    <property type="match status" value="1"/>
</dbReference>
<dbReference type="Pfam" id="PF00294">
    <property type="entry name" value="PfkB"/>
    <property type="match status" value="1"/>
</dbReference>
<dbReference type="PIRSF" id="PIRSF000535">
    <property type="entry name" value="1PFK/6PFK/LacC"/>
    <property type="match status" value="1"/>
</dbReference>
<dbReference type="SUPFAM" id="SSF53613">
    <property type="entry name" value="Ribokinase-like"/>
    <property type="match status" value="1"/>
</dbReference>
<dbReference type="PROSITE" id="PS00583">
    <property type="entry name" value="PFKB_KINASES_1"/>
    <property type="match status" value="1"/>
</dbReference>
<dbReference type="PROSITE" id="PS00584">
    <property type="entry name" value="PFKB_KINASES_2"/>
    <property type="match status" value="1"/>
</dbReference>
<proteinExistence type="inferred from homology"/>
<gene>
    <name evidence="1" type="primary">lacC</name>
    <name type="ordered locus">SAG1929</name>
</gene>
<sequence>MILTVTLNPSIDISYCLENFNMDTVNRVTDVSKTPGGKGLNVTRVLSQLGDNVVATGLLGGDFGDFIRSGLDALEIRHQFLSIGGETRHCIAVLHEGQQTEILEKGPHITKDEADAFLNHLKLIFDAATIITVSGSLPKGLPSDYYARLISLANHFNKKVVLDCSGEALRSVLKSSAKPTVIKPNLEELTQLIGKPISYSLDELKSTLQQDLFRGIDWVIVSLGARGAFAKHGNHYYQVTIPKIEVINPVGSGDATVAGIASALEHQLDDTNLLKRANVLGMLNAQETLTGHINLTYYQELISQIQVKEV</sequence>
<organism>
    <name type="scientific">Streptococcus agalactiae serotype V (strain ATCC BAA-611 / 2603 V/R)</name>
    <dbReference type="NCBI Taxonomy" id="208435"/>
    <lineage>
        <taxon>Bacteria</taxon>
        <taxon>Bacillati</taxon>
        <taxon>Bacillota</taxon>
        <taxon>Bacilli</taxon>
        <taxon>Lactobacillales</taxon>
        <taxon>Streptococcaceae</taxon>
        <taxon>Streptococcus</taxon>
    </lineage>
</organism>
<name>LACC_STRA5</name>
<protein>
    <recommendedName>
        <fullName evidence="1">Tagatose-6-phosphate kinase</fullName>
        <ecNumber evidence="1">2.7.1.144</ecNumber>
    </recommendedName>
    <alternativeName>
        <fullName evidence="1">Phosphotagatokinase</fullName>
    </alternativeName>
</protein>
<evidence type="ECO:0000255" key="1">
    <source>
        <dbReference type="HAMAP-Rule" id="MF_01557"/>
    </source>
</evidence>
<keyword id="KW-0067">ATP-binding</keyword>
<keyword id="KW-0418">Kinase</keyword>
<keyword id="KW-0423">Lactose metabolism</keyword>
<keyword id="KW-0547">Nucleotide-binding</keyword>
<keyword id="KW-1185">Reference proteome</keyword>
<keyword id="KW-0808">Transferase</keyword>
<accession>Q8DXC2</accession>
<feature type="chain" id="PRO_0000203929" description="Tagatose-6-phosphate kinase">
    <location>
        <begin position="1"/>
        <end position="310"/>
    </location>
</feature>